<keyword id="KW-0012">Acyltransferase</keyword>
<keyword id="KW-0808">Transferase</keyword>
<reference key="1">
    <citation type="journal article" date="1998" name="J. Biol. Chem.">
        <title>Catabolism of phenylacetic acid in Escherichia coli. Characterization of a new aerobic hybrid pathway.</title>
        <authorList>
            <person name="Ferrandez A."/>
            <person name="Minambres B."/>
            <person name="Garcia B."/>
            <person name="Olivera E.R."/>
            <person name="Luengo J.M."/>
            <person name="Garcia J.L."/>
            <person name="Diaz E."/>
        </authorList>
    </citation>
    <scope>NUCLEOTIDE SEQUENCE [GENOMIC DNA]</scope>
    <source>
        <strain>W / ATCC 11105 / DSM 1900 / 113-3</strain>
    </source>
</reference>
<protein>
    <recommendedName>
        <fullName>Beta-ketoadipyl-CoA thiolase</fullName>
        <ecNumber>2.3.1.174</ecNumber>
    </recommendedName>
    <alternativeName>
        <fullName>3-oxoadipyl-CoA thiolase</fullName>
    </alternativeName>
</protein>
<dbReference type="EC" id="2.3.1.174"/>
<dbReference type="EMBL" id="X97452">
    <property type="protein sequence ID" value="CAA66099.1"/>
    <property type="molecule type" value="Genomic_DNA"/>
</dbReference>
<dbReference type="RefSeq" id="WP_001206190.1">
    <property type="nucleotide sequence ID" value="NZ_WXZA01000004.1"/>
</dbReference>
<dbReference type="SMR" id="P0C7L3"/>
<dbReference type="STRING" id="585034.ECIAI1_1397"/>
<dbReference type="eggNOG" id="COG0183">
    <property type="taxonomic scope" value="Bacteria"/>
</dbReference>
<dbReference type="OMA" id="MSRVPMW"/>
<dbReference type="UniPathway" id="UPA00930"/>
<dbReference type="GO" id="GO:0033812">
    <property type="term" value="F:3-oxoadipyl-CoA thiolase activity"/>
    <property type="evidence" value="ECO:0007669"/>
    <property type="project" value="UniProtKB-EC"/>
</dbReference>
<dbReference type="GO" id="GO:0019619">
    <property type="term" value="P:3,4-dihydroxybenzoate catabolic process"/>
    <property type="evidence" value="ECO:0007669"/>
    <property type="project" value="InterPro"/>
</dbReference>
<dbReference type="GO" id="GO:0010124">
    <property type="term" value="P:phenylacetate catabolic process"/>
    <property type="evidence" value="ECO:0007669"/>
    <property type="project" value="UniProtKB-UniPathway"/>
</dbReference>
<dbReference type="CDD" id="cd00751">
    <property type="entry name" value="thiolase"/>
    <property type="match status" value="1"/>
</dbReference>
<dbReference type="FunFam" id="3.40.47.10:FF:000010">
    <property type="entry name" value="Acetyl-CoA acetyltransferase (Thiolase)"/>
    <property type="match status" value="1"/>
</dbReference>
<dbReference type="Gene3D" id="3.40.47.10">
    <property type="match status" value="1"/>
</dbReference>
<dbReference type="InterPro" id="IPR012793">
    <property type="entry name" value="PcaF"/>
</dbReference>
<dbReference type="InterPro" id="IPR002155">
    <property type="entry name" value="Thiolase"/>
</dbReference>
<dbReference type="InterPro" id="IPR016039">
    <property type="entry name" value="Thiolase-like"/>
</dbReference>
<dbReference type="InterPro" id="IPR020615">
    <property type="entry name" value="Thiolase_acyl_enz_int_AS"/>
</dbReference>
<dbReference type="InterPro" id="IPR020610">
    <property type="entry name" value="Thiolase_AS"/>
</dbReference>
<dbReference type="InterPro" id="IPR020617">
    <property type="entry name" value="Thiolase_C"/>
</dbReference>
<dbReference type="InterPro" id="IPR020613">
    <property type="entry name" value="Thiolase_CS"/>
</dbReference>
<dbReference type="InterPro" id="IPR020616">
    <property type="entry name" value="Thiolase_N"/>
</dbReference>
<dbReference type="NCBIfam" id="TIGR01930">
    <property type="entry name" value="AcCoA-C-Actrans"/>
    <property type="match status" value="1"/>
</dbReference>
<dbReference type="NCBIfam" id="TIGR02430">
    <property type="entry name" value="pcaF"/>
    <property type="match status" value="1"/>
</dbReference>
<dbReference type="NCBIfam" id="NF006551">
    <property type="entry name" value="PRK09050.1"/>
    <property type="match status" value="1"/>
</dbReference>
<dbReference type="PANTHER" id="PTHR18919">
    <property type="entry name" value="ACETYL-COA C-ACYLTRANSFERASE"/>
    <property type="match status" value="1"/>
</dbReference>
<dbReference type="PANTHER" id="PTHR18919:SF12">
    <property type="entry name" value="ACYLTRANSFERASE RV0859-RELATED"/>
    <property type="match status" value="1"/>
</dbReference>
<dbReference type="Pfam" id="PF02803">
    <property type="entry name" value="Thiolase_C"/>
    <property type="match status" value="1"/>
</dbReference>
<dbReference type="Pfam" id="PF00108">
    <property type="entry name" value="Thiolase_N"/>
    <property type="match status" value="1"/>
</dbReference>
<dbReference type="PIRSF" id="PIRSF000429">
    <property type="entry name" value="Ac-CoA_Ac_transf"/>
    <property type="match status" value="1"/>
</dbReference>
<dbReference type="SUPFAM" id="SSF53901">
    <property type="entry name" value="Thiolase-like"/>
    <property type="match status" value="2"/>
</dbReference>
<dbReference type="PROSITE" id="PS00098">
    <property type="entry name" value="THIOLASE_1"/>
    <property type="match status" value="1"/>
</dbReference>
<dbReference type="PROSITE" id="PS00737">
    <property type="entry name" value="THIOLASE_2"/>
    <property type="match status" value="1"/>
</dbReference>
<dbReference type="PROSITE" id="PS00099">
    <property type="entry name" value="THIOLASE_3"/>
    <property type="match status" value="1"/>
</dbReference>
<evidence type="ECO:0000250" key="1"/>
<evidence type="ECO:0000255" key="2">
    <source>
        <dbReference type="PROSITE-ProRule" id="PRU10020"/>
    </source>
</evidence>
<evidence type="ECO:0000305" key="3"/>
<gene>
    <name type="primary">paaJ</name>
</gene>
<organism>
    <name type="scientific">Escherichia coli</name>
    <dbReference type="NCBI Taxonomy" id="562"/>
    <lineage>
        <taxon>Bacteria</taxon>
        <taxon>Pseudomonadati</taxon>
        <taxon>Pseudomonadota</taxon>
        <taxon>Gammaproteobacteria</taxon>
        <taxon>Enterobacterales</taxon>
        <taxon>Enterobacteriaceae</taxon>
        <taxon>Escherichia</taxon>
    </lineage>
</organism>
<name>PAAJ_ECOLX</name>
<feature type="chain" id="PRO_0000337827" description="Beta-ketoadipyl-CoA thiolase">
    <location>
        <begin position="1"/>
        <end position="401"/>
    </location>
</feature>
<feature type="active site" description="Acyl-thioester intermediate" evidence="1">
    <location>
        <position position="90"/>
    </location>
</feature>
<feature type="active site" description="Proton acceptor" evidence="2">
    <location>
        <position position="357"/>
    </location>
</feature>
<feature type="active site" description="Proton acceptor" evidence="2">
    <location>
        <position position="387"/>
    </location>
</feature>
<proteinExistence type="inferred from homology"/>
<accession>P0C7L3</accession>
<accession>O53017</accession>
<accession>P77525</accession>
<sequence>MREAFICDGIRTPIGRYGGALSGVRADDLAAIPLRELLVRNPRLDAECIDDVILGCANQAGEDNRNVARMATLLAGLPQSVSGTTINRLCGSGLDALGFAARAIKAGDGDLLIAGGVESMSRAPFVMGKATSAFSRQAEMFDTTIGWRFVNPLMAQQFGTDSMPETAENVAELLKISREDQDSFALRSQQRTAKAQSSGILAEEIVPVVLKNKKGVVTEIQHDEHLRPETTLEQLRGLKAPFRANGVITAGNASGVNDGAAALIIASEQMAAAQGLTPRARIVAMATAGVEPRLMGLGPVPATRRVLERAGLSIHDMDVIELNEAFAAQALGVLRELGLPDDAPHVNPNGGAIALGHPLGMSGARLALAASHELHRRNGRYALCTMCIGVGQGIAMILERV</sequence>
<comment type="function">
    <text evidence="1">Catalyzes thiolytic cleavage of beta-ketoadipyl-CoA to succinyl-CoA and acetyl-CoA.</text>
</comment>
<comment type="catalytic activity">
    <reaction>
        <text>succinyl-CoA + acetyl-CoA = 3-oxoadipyl-CoA + CoA</text>
        <dbReference type="Rhea" id="RHEA:19481"/>
        <dbReference type="ChEBI" id="CHEBI:57287"/>
        <dbReference type="ChEBI" id="CHEBI:57288"/>
        <dbReference type="ChEBI" id="CHEBI:57292"/>
        <dbReference type="ChEBI" id="CHEBI:57348"/>
        <dbReference type="EC" id="2.3.1.174"/>
    </reaction>
</comment>
<comment type="pathway">
    <text>Aromatic compound metabolism; phenylacetate degradation.</text>
</comment>
<comment type="similarity">
    <text evidence="3">Belongs to the thiolase-like superfamily. Thiolase family.</text>
</comment>